<keyword id="KW-0002">3D-structure</keyword>
<keyword id="KW-0448">Lipopolysaccharide biosynthesis</keyword>
<keyword id="KW-0808">Transferase</keyword>
<evidence type="ECO:0000269" key="1">
    <source>
    </source>
</evidence>
<evidence type="ECO:0000269" key="2">
    <source>
    </source>
</evidence>
<evidence type="ECO:0000303" key="3">
    <source>
    </source>
</evidence>
<evidence type="ECO:0000305" key="4"/>
<evidence type="ECO:0000305" key="5">
    <source>
    </source>
</evidence>
<evidence type="ECO:0000312" key="6">
    <source>
        <dbReference type="EMBL" id="AAL52599.1"/>
    </source>
</evidence>
<evidence type="ECO:0000312" key="7">
    <source>
        <dbReference type="EMBL" id="EEW88696.1"/>
    </source>
</evidence>
<evidence type="ECO:0007744" key="8">
    <source>
        <dbReference type="PDB" id="5VYR"/>
    </source>
</evidence>
<evidence type="ECO:0007744" key="9">
    <source>
        <dbReference type="PDB" id="5VYS"/>
    </source>
</evidence>
<evidence type="ECO:0007744" key="10">
    <source>
        <dbReference type="PDB" id="5VYT"/>
    </source>
</evidence>
<evidence type="ECO:0007744" key="11">
    <source>
        <dbReference type="PDB" id="5VYU"/>
    </source>
</evidence>
<evidence type="ECO:0007829" key="12">
    <source>
        <dbReference type="PDB" id="5VYR"/>
    </source>
</evidence>
<evidence type="ECO:0007829" key="13">
    <source>
        <dbReference type="PDB" id="5VYS"/>
    </source>
</evidence>
<protein>
    <recommendedName>
        <fullName evidence="4">GDP-perosamine N-formyltransferase</fullName>
        <ecNumber evidence="2">2.1.2.14</ecNumber>
    </recommendedName>
</protein>
<comment type="function">
    <text evidence="1 2">Involved in the lipopolysaccharide (LPS) O-antigen biosynthesis (PubMed:11081580). Catalyzes the transfer of a formyl group to GDP-perosamine, leading to the formation of GDP-N-formylperosamine (PubMed:11081580, PubMed:28636341). In vitro, can also function on GDP-3-deoxyperosamine, thereby providing an enzymatic method for producing a novel trideoxysugar not found in nature (PubMed:28636341).</text>
</comment>
<comment type="catalytic activity">
    <reaction evidence="2">
        <text>GDP-alpha-D-perosamine + (6R)-10-formyltetrahydrofolate = GDP-N-formyl-alpha-D-perosamine + (6S)-5,6,7,8-tetrahydrofolate + H(+)</text>
        <dbReference type="Rhea" id="RHEA:68588"/>
        <dbReference type="ChEBI" id="CHEBI:15378"/>
        <dbReference type="ChEBI" id="CHEBI:57453"/>
        <dbReference type="ChEBI" id="CHEBI:73996"/>
        <dbReference type="ChEBI" id="CHEBI:176524"/>
        <dbReference type="ChEBI" id="CHEBI:195366"/>
        <dbReference type="EC" id="2.1.2.14"/>
    </reaction>
    <physiologicalReaction direction="left-to-right" evidence="2">
        <dbReference type="Rhea" id="RHEA:68589"/>
    </physiologicalReaction>
</comment>
<comment type="pathway">
    <text evidence="1">Bacterial outer membrane biogenesis; lipopolysaccharide biosynthesis.</text>
</comment>
<comment type="subunit">
    <text evidence="2">Homodimer.</text>
</comment>
<comment type="disruption phenotype">
    <text evidence="1">Deletion mutant is completely O-antigen-negative.</text>
</comment>
<comment type="similarity">
    <text evidence="4">Belongs to the Fmt family.</text>
</comment>
<feature type="chain" id="PRO_0000455052" description="GDP-perosamine N-formyltransferase">
    <location>
        <begin position="1"/>
        <end position="259"/>
    </location>
</feature>
<feature type="binding site" evidence="5">
    <location>
        <begin position="89"/>
        <end position="91"/>
    </location>
    <ligand>
        <name>(6S)-5,6,7,8-tetrahydrofolate</name>
        <dbReference type="ChEBI" id="CHEBI:57453"/>
    </ligand>
</feature>
<feature type="binding site" evidence="5">
    <location>
        <begin position="139"/>
        <end position="143"/>
    </location>
    <ligand>
        <name>(6S)-5,6,7,8-tetrahydrofolate</name>
        <dbReference type="ChEBI" id="CHEBI:57453"/>
    </ligand>
</feature>
<feature type="strand" evidence="12">
    <location>
        <begin position="9"/>
        <end position="13"/>
    </location>
</feature>
<feature type="helix" evidence="12">
    <location>
        <begin position="15"/>
        <end position="27"/>
    </location>
</feature>
<feature type="helix" evidence="12">
    <location>
        <begin position="32"/>
        <end position="34"/>
    </location>
</feature>
<feature type="strand" evidence="12">
    <location>
        <begin position="35"/>
        <end position="38"/>
    </location>
</feature>
<feature type="turn" evidence="12">
    <location>
        <begin position="44"/>
        <end position="46"/>
    </location>
</feature>
<feature type="helix" evidence="12">
    <location>
        <begin position="47"/>
        <end position="56"/>
    </location>
</feature>
<feature type="strand" evidence="12">
    <location>
        <begin position="59"/>
        <end position="61"/>
    </location>
</feature>
<feature type="helix" evidence="12">
    <location>
        <begin position="68"/>
        <end position="77"/>
    </location>
</feature>
<feature type="strand" evidence="12">
    <location>
        <begin position="80"/>
        <end position="86"/>
    </location>
</feature>
<feature type="helix" evidence="12">
    <location>
        <begin position="93"/>
        <end position="96"/>
    </location>
</feature>
<feature type="strand" evidence="12">
    <location>
        <begin position="103"/>
        <end position="110"/>
    </location>
</feature>
<feature type="turn" evidence="12">
    <location>
        <begin position="111"/>
        <end position="114"/>
    </location>
</feature>
<feature type="strand" evidence="12">
    <location>
        <begin position="115"/>
        <end position="117"/>
    </location>
</feature>
<feature type="helix" evidence="12">
    <location>
        <begin position="119"/>
        <end position="125"/>
    </location>
</feature>
<feature type="strand" evidence="12">
    <location>
        <begin position="129"/>
        <end position="136"/>
    </location>
</feature>
<feature type="strand" evidence="13">
    <location>
        <begin position="140"/>
        <end position="143"/>
    </location>
</feature>
<feature type="strand" evidence="12">
    <location>
        <begin position="147"/>
        <end position="154"/>
    </location>
</feature>
<feature type="helix" evidence="12">
    <location>
        <begin position="161"/>
        <end position="173"/>
    </location>
</feature>
<feature type="helix" evidence="12">
    <location>
        <begin position="176"/>
        <end position="185"/>
    </location>
</feature>
<feature type="helix" evidence="12">
    <location>
        <begin position="204"/>
        <end position="207"/>
    </location>
</feature>
<feature type="helix" evidence="12">
    <location>
        <begin position="215"/>
        <end position="225"/>
    </location>
</feature>
<feature type="strand" evidence="13">
    <location>
        <begin position="243"/>
        <end position="246"/>
    </location>
</feature>
<feature type="helix" evidence="12">
    <location>
        <begin position="247"/>
        <end position="250"/>
    </location>
</feature>
<sequence>MAIAPNTRVLVAGYGLPAEFCVTTLIGMGVEIDKIAVATHREDNRNCGLHSMLRLRNIQFTTAAANSEEFYEFGANFDPDMIISMHYRSLIPGRFLKLAKKGSVNLHPSLLPAYRGTNSVAWVIINGESETGFSYHRMDENFDTGAILLQERISVEETDTAFSLFHRQIARAMLRLEEVILKLDQGDPGFAQLGEASYYARELPFGGVIDPRWSEVQIDRFIRAMFFPPFPPAVLKIDGKVYYVPSIDIYRSLMRGIPS</sequence>
<reference key="1">
    <citation type="journal article" date="2000" name="Res. Microbiol.">
        <title>Genetic organisation of the lipopolysaccharide O-antigen biosynthesis region of brucella melitensis 16M (wbk).</title>
        <authorList>
            <person name="Godfroid F."/>
            <person name="Cloeckaert A."/>
            <person name="Taminiau B."/>
            <person name="Danese I."/>
            <person name="Tibor A."/>
            <person name="de Bolle X."/>
            <person name="Mertens P."/>
            <person name="Letesson J.J."/>
        </authorList>
    </citation>
    <scope>NUCLEOTIDE SEQUENCE [GENOMIC DNA]</scope>
    <scope>FUNCTION</scope>
    <scope>PATHWAY</scope>
    <scope>DISRUPTION PHENOTYPE</scope>
    <source>
        <strain>ATCC 23456 / CCUG 17765 / NCTC 10094 / 16M</strain>
    </source>
</reference>
<reference key="2">
    <citation type="journal article" date="2002" name="Proc. Natl. Acad. Sci. U.S.A.">
        <title>The genome sequence of the facultative intracellular pathogen Brucella melitensis.</title>
        <authorList>
            <person name="DelVecchio V.G."/>
            <person name="Kapatral V."/>
            <person name="Redkar R.J."/>
            <person name="Patra G."/>
            <person name="Mujer C."/>
            <person name="Los T."/>
            <person name="Ivanova N."/>
            <person name="Anderson I."/>
            <person name="Bhattacharyya A."/>
            <person name="Lykidis A."/>
            <person name="Reznik G."/>
            <person name="Jablonski L."/>
            <person name="Larsen N."/>
            <person name="D'Souza M."/>
            <person name="Bernal A."/>
            <person name="Mazur M."/>
            <person name="Goltsman E."/>
            <person name="Selkov E."/>
            <person name="Elzer P.H."/>
            <person name="Hagius S."/>
            <person name="O'Callaghan D."/>
            <person name="Letesson J.-J."/>
            <person name="Haselkorn R."/>
            <person name="Kyrpides N.C."/>
            <person name="Overbeek R."/>
        </authorList>
    </citation>
    <scope>NUCLEOTIDE SEQUENCE [LARGE SCALE GENOMIC DNA]</scope>
    <source>
        <strain>ATCC 23456 / CCUG 17765 / NCTC 10094 / 16M</strain>
    </source>
</reference>
<reference key="3">
    <citation type="submission" date="2009-06" db="EMBL/GenBank/DDBJ databases">
        <title>The genome sequence of Brucella melitensis bv. 1 str. 16M.</title>
        <authorList>
            <consortium name="The Broad Institute Genome Sequencing Platform"/>
            <person name="Ward D."/>
            <person name="Young S.K."/>
            <person name="Kodira C.D."/>
            <person name="Zeng Q."/>
            <person name="Koehrsen M."/>
            <person name="Alvarado L."/>
            <person name="Berlin A."/>
            <person name="Borenstein D."/>
            <person name="Chen Z."/>
            <person name="Engels R."/>
            <person name="Freedman E."/>
            <person name="Gellesch M."/>
            <person name="Goldberg J."/>
            <person name="Griggs A."/>
            <person name="Gujja S."/>
            <person name="Heiman D."/>
            <person name="Hepburn T."/>
            <person name="Howarth C."/>
            <person name="Jen D."/>
            <person name="Larson L."/>
            <person name="Lewis B."/>
            <person name="Mehta T."/>
            <person name="Park D."/>
            <person name="Pearson M."/>
            <person name="Roberts A."/>
            <person name="Saif S."/>
            <person name="Shea T."/>
            <person name="Shenoy N."/>
            <person name="Sisk P."/>
            <person name="Stolte C."/>
            <person name="Sykes S."/>
            <person name="Walk T."/>
            <person name="White J."/>
            <person name="Yandava C."/>
            <person name="Whatmore A.M."/>
            <person name="Perrett L.L."/>
            <person name="O'Callaghan D."/>
            <person name="Nusbaum C."/>
            <person name="Galagan J."/>
            <person name="Birren B."/>
        </authorList>
    </citation>
    <scope>NUCLEOTIDE SEQUENCE [LARGE SCALE GENOMIC DNA]</scope>
    <source>
        <strain>ATCC 23456 / CCUG 17765 / NCTC 10094 / 16M</strain>
    </source>
</reference>
<reference evidence="8 9 10 11" key="4">
    <citation type="journal article" date="2017" name="Biochemistry">
        <title>Biochemical characterization of WbkC, an N-formyltransferase from Brucella melitensis.</title>
        <authorList>
            <person name="Riegert A.S."/>
            <person name="Chantigian D.P."/>
            <person name="Thoden J.B."/>
            <person name="Tipton P.A."/>
            <person name="Holden H.M."/>
        </authorList>
    </citation>
    <scope>X-RAY CRYSTALLOGRAPHY (1.70 ANGSTROMS) OF MUTANTS ALA-78; SER-47/ALA-78 AND ALA-78/ALA-142 IN COMPLEXES WITH GMP; GDP AND TETRAHYDROFOLIC ACID</scope>
    <scope>FUNCTION</scope>
    <scope>CATALYTIC ACTIVITY</scope>
    <scope>SUBUNIT</scope>
    <source>
        <strain>ATCC 23456 / CCUG 17765 / NCTC 10094 / 16M</strain>
    </source>
</reference>
<gene>
    <name evidence="3" type="primary">wbkC</name>
    <name evidence="6" type="ordered locus">BMEI1418</name>
    <name evidence="7" type="ORF">BAWG_0804</name>
</gene>
<name>WBKC_BRUME</name>
<proteinExistence type="evidence at protein level"/>
<accession>F8WJP6</accession>
<accession>D0B1X4</accession>
<accession>Q7CNT6</accession>
<accession>Q9ZHX0</accession>
<dbReference type="EC" id="2.1.2.14" evidence="2"/>
<dbReference type="EMBL" id="AF047478">
    <property type="protein sequence ID" value="AAC98617.1"/>
    <property type="molecule type" value="Genomic_DNA"/>
</dbReference>
<dbReference type="EMBL" id="AE008917">
    <property type="protein sequence ID" value="AAL52599.1"/>
    <property type="molecule type" value="Genomic_DNA"/>
</dbReference>
<dbReference type="EMBL" id="GG703778">
    <property type="protein sequence ID" value="EEW88696.1"/>
    <property type="molecule type" value="Genomic_DNA"/>
</dbReference>
<dbReference type="PIR" id="AD3429">
    <property type="entry name" value="AD3429"/>
</dbReference>
<dbReference type="RefSeq" id="WP_002963675.1">
    <property type="nucleotide sequence ID" value="NZ_GG703778.1"/>
</dbReference>
<dbReference type="PDB" id="5VYR">
    <property type="method" value="X-ray"/>
    <property type="resolution" value="1.70 A"/>
    <property type="chains" value="A/B=1-259"/>
</dbReference>
<dbReference type="PDB" id="5VYS">
    <property type="method" value="X-ray"/>
    <property type="resolution" value="2.20 A"/>
    <property type="chains" value="A/B=1-259"/>
</dbReference>
<dbReference type="PDB" id="5VYT">
    <property type="method" value="X-ray"/>
    <property type="resolution" value="2.20 A"/>
    <property type="chains" value="A/B/C/D=1-259"/>
</dbReference>
<dbReference type="PDB" id="5VYU">
    <property type="method" value="X-ray"/>
    <property type="resolution" value="2.20 A"/>
    <property type="chains" value="A/B=1-259"/>
</dbReference>
<dbReference type="PDBsum" id="5VYR"/>
<dbReference type="PDBsum" id="5VYS"/>
<dbReference type="PDBsum" id="5VYT"/>
<dbReference type="PDBsum" id="5VYU"/>
<dbReference type="SMR" id="F8WJP6"/>
<dbReference type="GeneID" id="97534122"/>
<dbReference type="KEGG" id="bme:BMEI1418"/>
<dbReference type="KEGG" id="bmel:DK63_2070"/>
<dbReference type="PATRIC" id="fig|224914.52.peg.2170"/>
<dbReference type="eggNOG" id="COG0223">
    <property type="taxonomic scope" value="Bacteria"/>
</dbReference>
<dbReference type="PhylomeDB" id="F8WJP6"/>
<dbReference type="BioCyc" id="MetaCyc:MONOMER-21710"/>
<dbReference type="BRENDA" id="2.1.2.14">
    <property type="organism ID" value="995"/>
</dbReference>
<dbReference type="UniPathway" id="UPA00030"/>
<dbReference type="Proteomes" id="UP000000419">
    <property type="component" value="Chromosome I"/>
</dbReference>
<dbReference type="GO" id="GO:0005829">
    <property type="term" value="C:cytosol"/>
    <property type="evidence" value="ECO:0007669"/>
    <property type="project" value="TreeGrafter"/>
</dbReference>
<dbReference type="GO" id="GO:0008446">
    <property type="term" value="F:GDP-mannose 4,6-dehydratase activity"/>
    <property type="evidence" value="ECO:0007669"/>
    <property type="project" value="UniProtKB-EC"/>
</dbReference>
<dbReference type="GO" id="GO:0004479">
    <property type="term" value="F:methionyl-tRNA formyltransferase activity"/>
    <property type="evidence" value="ECO:0007669"/>
    <property type="project" value="TreeGrafter"/>
</dbReference>
<dbReference type="GO" id="GO:0009103">
    <property type="term" value="P:lipopolysaccharide biosynthetic process"/>
    <property type="evidence" value="ECO:0007669"/>
    <property type="project" value="UniProtKB-UniPathway"/>
</dbReference>
<dbReference type="CDD" id="cd08369">
    <property type="entry name" value="FMT_core"/>
    <property type="match status" value="1"/>
</dbReference>
<dbReference type="Gene3D" id="3.40.50.12230">
    <property type="match status" value="1"/>
</dbReference>
<dbReference type="InterPro" id="IPR002376">
    <property type="entry name" value="Formyl_transf_N"/>
</dbReference>
<dbReference type="InterPro" id="IPR036477">
    <property type="entry name" value="Formyl_transf_N_sf"/>
</dbReference>
<dbReference type="PANTHER" id="PTHR11138">
    <property type="entry name" value="METHIONYL-TRNA FORMYLTRANSFERASE"/>
    <property type="match status" value="1"/>
</dbReference>
<dbReference type="PANTHER" id="PTHR11138:SF5">
    <property type="entry name" value="METHIONYL-TRNA FORMYLTRANSFERASE, MITOCHONDRIAL"/>
    <property type="match status" value="1"/>
</dbReference>
<dbReference type="Pfam" id="PF00551">
    <property type="entry name" value="Formyl_trans_N"/>
    <property type="match status" value="1"/>
</dbReference>
<dbReference type="SUPFAM" id="SSF53328">
    <property type="entry name" value="Formyltransferase"/>
    <property type="match status" value="1"/>
</dbReference>
<organism>
    <name type="scientific">Brucella melitensis biotype 1 (strain ATCC 23456 / CCUG 17765 / NCTC 10094 / 16M)</name>
    <dbReference type="NCBI Taxonomy" id="224914"/>
    <lineage>
        <taxon>Bacteria</taxon>
        <taxon>Pseudomonadati</taxon>
        <taxon>Pseudomonadota</taxon>
        <taxon>Alphaproteobacteria</taxon>
        <taxon>Hyphomicrobiales</taxon>
        <taxon>Brucellaceae</taxon>
        <taxon>Brucella/Ochrobactrum group</taxon>
        <taxon>Brucella</taxon>
    </lineage>
</organism>